<feature type="chain" id="PRO_0000271044" description="CDAN1-interacting nuclease 1">
    <location>
        <begin position="1"/>
        <end position="281"/>
    </location>
</feature>
<feature type="modified residue" description="Phosphothreonine" evidence="10">
    <location>
        <position position="114"/>
    </location>
</feature>
<feature type="splice variant" id="VSP_022271" description="In isoform 2." evidence="5 6">
    <location>
        <begin position="1"/>
        <end position="98"/>
    </location>
</feature>
<feature type="sequence variant" id="VAR_082037" description="In CDAN1B; uncertain significance." evidence="2">
    <original>P</original>
    <variation>R</variation>
    <location>
        <position position="20"/>
    </location>
</feature>
<feature type="sequence variant" id="VAR_059622" description="In dbSNP:rs3784678.">
    <original>L</original>
    <variation>V</variation>
    <location>
        <position position="73"/>
    </location>
</feature>
<feature type="sequence variant" id="VAR_070876" description="In CDAN1B; dbSNP:rs587777101." evidence="1">
    <original>Y</original>
    <variation>C</variation>
    <location>
        <position position="94"/>
    </location>
</feature>
<feature type="sequence variant" id="VAR_082038" description="In CDAN1B; no effect on gene expression and protein level; impaired erythroid cell differentiation; no effect on nuclear and cytoplasmic location; dbSNP:rs587777101." evidence="3">
    <original>Y</original>
    <variation>S</variation>
    <location>
        <position position="94"/>
    </location>
</feature>
<feature type="sequence variant" id="VAR_086958" description="In CDAN1B; uncertain significance." evidence="4">
    <original>L</original>
    <variation>V</variation>
    <location>
        <position position="136"/>
    </location>
</feature>
<feature type="sequence variant" id="VAR_070877" description="In CDAN1B; dbSNP:rs587777100." evidence="1">
    <original>L</original>
    <variation>Q</variation>
    <location>
        <position position="178"/>
    </location>
</feature>
<feature type="sequence variant" id="VAR_082039" description="In CDAN1B; reduced gene expression and protein level; impaired erythroid cell differentiation; increased S-phase of the cell-cycle; no effect on nuclear and cytoplasmic location." evidence="3">
    <original>H</original>
    <variation>P</variation>
    <location>
        <position position="230"/>
    </location>
</feature>
<feature type="sequence variant" id="VAR_082040" description="In CDAN1B; uncertain significance; dbSNP:rs768744226." evidence="2">
    <original>Y</original>
    <variation>C</variation>
    <location>
        <position position="236"/>
    </location>
</feature>
<feature type="sequence variant" id="VAR_086959" description="In CDAN1B; uncertain significance." evidence="4">
    <original>Y</original>
    <variation>C</variation>
    <location>
        <position position="247"/>
    </location>
</feature>
<feature type="sequence variant" id="VAR_086960" description="In CDAN1B; uncertain significance." evidence="4">
    <original>I</original>
    <variation>T</variation>
    <location>
        <position position="273"/>
    </location>
</feature>
<gene>
    <name evidence="9" type="primary">CDIN1</name>
    <name type="synonym">C15orf41</name>
</gene>
<accession>Q9Y2V0</accession>
<accession>B2RD87</accession>
<proteinExistence type="evidence at protein level"/>
<name>CDIN1_HUMAN</name>
<organism>
    <name type="scientific">Homo sapiens</name>
    <name type="common">Human</name>
    <dbReference type="NCBI Taxonomy" id="9606"/>
    <lineage>
        <taxon>Eukaryota</taxon>
        <taxon>Metazoa</taxon>
        <taxon>Chordata</taxon>
        <taxon>Craniata</taxon>
        <taxon>Vertebrata</taxon>
        <taxon>Euteleostomi</taxon>
        <taxon>Mammalia</taxon>
        <taxon>Eutheria</taxon>
        <taxon>Euarchontoglires</taxon>
        <taxon>Primates</taxon>
        <taxon>Haplorrhini</taxon>
        <taxon>Catarrhini</taxon>
        <taxon>Hominidae</taxon>
        <taxon>Homo</taxon>
    </lineage>
</organism>
<protein>
    <recommendedName>
        <fullName evidence="9">CDAN1-interacting nuclease 1</fullName>
    </recommendedName>
    <alternativeName>
        <fullName>Protein HH114</fullName>
    </alternativeName>
</protein>
<reference key="1">
    <citation type="submission" date="1998-12" db="EMBL/GenBank/DDBJ databases">
        <title>Prediction of the coding sequence of an unidentified human gene.</title>
        <authorList>
            <person name="Wei Y.J."/>
            <person name="Ding J.F."/>
            <person name="Xiong H."/>
            <person name="Zhou Y."/>
            <person name="Liew C.C."/>
        </authorList>
    </citation>
    <scope>NUCLEOTIDE SEQUENCE [MRNA] (ISOFORM 2)</scope>
    <source>
        <tissue>Heart</tissue>
    </source>
</reference>
<reference key="2">
    <citation type="journal article" date="2004" name="Nat. Genet.">
        <title>Complete sequencing and characterization of 21,243 full-length human cDNAs.</title>
        <authorList>
            <person name="Ota T."/>
            <person name="Suzuki Y."/>
            <person name="Nishikawa T."/>
            <person name="Otsuki T."/>
            <person name="Sugiyama T."/>
            <person name="Irie R."/>
            <person name="Wakamatsu A."/>
            <person name="Hayashi K."/>
            <person name="Sato H."/>
            <person name="Nagai K."/>
            <person name="Kimura K."/>
            <person name="Makita H."/>
            <person name="Sekine M."/>
            <person name="Obayashi M."/>
            <person name="Nishi T."/>
            <person name="Shibahara T."/>
            <person name="Tanaka T."/>
            <person name="Ishii S."/>
            <person name="Yamamoto J."/>
            <person name="Saito K."/>
            <person name="Kawai Y."/>
            <person name="Isono Y."/>
            <person name="Nakamura Y."/>
            <person name="Nagahari K."/>
            <person name="Murakami K."/>
            <person name="Yasuda T."/>
            <person name="Iwayanagi T."/>
            <person name="Wagatsuma M."/>
            <person name="Shiratori A."/>
            <person name="Sudo H."/>
            <person name="Hosoiri T."/>
            <person name="Kaku Y."/>
            <person name="Kodaira H."/>
            <person name="Kondo H."/>
            <person name="Sugawara M."/>
            <person name="Takahashi M."/>
            <person name="Kanda K."/>
            <person name="Yokoi T."/>
            <person name="Furuya T."/>
            <person name="Kikkawa E."/>
            <person name="Omura Y."/>
            <person name="Abe K."/>
            <person name="Kamihara K."/>
            <person name="Katsuta N."/>
            <person name="Sato K."/>
            <person name="Tanikawa M."/>
            <person name="Yamazaki M."/>
            <person name="Ninomiya K."/>
            <person name="Ishibashi T."/>
            <person name="Yamashita H."/>
            <person name="Murakawa K."/>
            <person name="Fujimori K."/>
            <person name="Tanai H."/>
            <person name="Kimata M."/>
            <person name="Watanabe M."/>
            <person name="Hiraoka S."/>
            <person name="Chiba Y."/>
            <person name="Ishida S."/>
            <person name="Ono Y."/>
            <person name="Takiguchi S."/>
            <person name="Watanabe S."/>
            <person name="Yosida M."/>
            <person name="Hotuta T."/>
            <person name="Kusano J."/>
            <person name="Kanehori K."/>
            <person name="Takahashi-Fujii A."/>
            <person name="Hara H."/>
            <person name="Tanase T.-O."/>
            <person name="Nomura Y."/>
            <person name="Togiya S."/>
            <person name="Komai F."/>
            <person name="Hara R."/>
            <person name="Takeuchi K."/>
            <person name="Arita M."/>
            <person name="Imose N."/>
            <person name="Musashino K."/>
            <person name="Yuuki H."/>
            <person name="Oshima A."/>
            <person name="Sasaki N."/>
            <person name="Aotsuka S."/>
            <person name="Yoshikawa Y."/>
            <person name="Matsunawa H."/>
            <person name="Ichihara T."/>
            <person name="Shiohata N."/>
            <person name="Sano S."/>
            <person name="Moriya S."/>
            <person name="Momiyama H."/>
            <person name="Satoh N."/>
            <person name="Takami S."/>
            <person name="Terashima Y."/>
            <person name="Suzuki O."/>
            <person name="Nakagawa S."/>
            <person name="Senoh A."/>
            <person name="Mizoguchi H."/>
            <person name="Goto Y."/>
            <person name="Shimizu F."/>
            <person name="Wakebe H."/>
            <person name="Hishigaki H."/>
            <person name="Watanabe T."/>
            <person name="Sugiyama A."/>
            <person name="Takemoto M."/>
            <person name="Kawakami B."/>
            <person name="Yamazaki M."/>
            <person name="Watanabe K."/>
            <person name="Kumagai A."/>
            <person name="Itakura S."/>
            <person name="Fukuzumi Y."/>
            <person name="Fujimori Y."/>
            <person name="Komiyama M."/>
            <person name="Tashiro H."/>
            <person name="Tanigami A."/>
            <person name="Fujiwara T."/>
            <person name="Ono T."/>
            <person name="Yamada K."/>
            <person name="Fujii Y."/>
            <person name="Ozaki K."/>
            <person name="Hirao M."/>
            <person name="Ohmori Y."/>
            <person name="Kawabata A."/>
            <person name="Hikiji T."/>
            <person name="Kobatake N."/>
            <person name="Inagaki H."/>
            <person name="Ikema Y."/>
            <person name="Okamoto S."/>
            <person name="Okitani R."/>
            <person name="Kawakami T."/>
            <person name="Noguchi S."/>
            <person name="Itoh T."/>
            <person name="Shigeta K."/>
            <person name="Senba T."/>
            <person name="Matsumura K."/>
            <person name="Nakajima Y."/>
            <person name="Mizuno T."/>
            <person name="Morinaga M."/>
            <person name="Sasaki M."/>
            <person name="Togashi T."/>
            <person name="Oyama M."/>
            <person name="Hata H."/>
            <person name="Watanabe M."/>
            <person name="Komatsu T."/>
            <person name="Mizushima-Sugano J."/>
            <person name="Satoh T."/>
            <person name="Shirai Y."/>
            <person name="Takahashi Y."/>
            <person name="Nakagawa K."/>
            <person name="Okumura K."/>
            <person name="Nagase T."/>
            <person name="Nomura N."/>
            <person name="Kikuchi H."/>
            <person name="Masuho Y."/>
            <person name="Yamashita R."/>
            <person name="Nakai K."/>
            <person name="Yada T."/>
            <person name="Nakamura Y."/>
            <person name="Ohara O."/>
            <person name="Isogai T."/>
            <person name="Sugano S."/>
        </authorList>
    </citation>
    <scope>NUCLEOTIDE SEQUENCE [LARGE SCALE MRNA] (ISOFORM 2)</scope>
    <source>
        <tissue>Heart</tissue>
    </source>
</reference>
<reference key="3">
    <citation type="submission" date="2005-07" db="EMBL/GenBank/DDBJ databases">
        <authorList>
            <person name="Mural R.J."/>
            <person name="Istrail S."/>
            <person name="Sutton G.G."/>
            <person name="Florea L."/>
            <person name="Halpern A.L."/>
            <person name="Mobarry C.M."/>
            <person name="Lippert R."/>
            <person name="Walenz B."/>
            <person name="Shatkay H."/>
            <person name="Dew I."/>
            <person name="Miller J.R."/>
            <person name="Flanigan M.J."/>
            <person name="Edwards N.J."/>
            <person name="Bolanos R."/>
            <person name="Fasulo D."/>
            <person name="Halldorsson B.V."/>
            <person name="Hannenhalli S."/>
            <person name="Turner R."/>
            <person name="Yooseph S."/>
            <person name="Lu F."/>
            <person name="Nusskern D.R."/>
            <person name="Shue B.C."/>
            <person name="Zheng X.H."/>
            <person name="Zhong F."/>
            <person name="Delcher A.L."/>
            <person name="Huson D.H."/>
            <person name="Kravitz S.A."/>
            <person name="Mouchard L."/>
            <person name="Reinert K."/>
            <person name="Remington K.A."/>
            <person name="Clark A.G."/>
            <person name="Waterman M.S."/>
            <person name="Eichler E.E."/>
            <person name="Adams M.D."/>
            <person name="Hunkapiller M.W."/>
            <person name="Myers E.W."/>
            <person name="Venter J.C."/>
        </authorList>
    </citation>
    <scope>NUCLEOTIDE SEQUENCE [LARGE SCALE GENOMIC DNA]</scope>
</reference>
<reference key="4">
    <citation type="journal article" date="2004" name="Genome Res.">
        <title>The status, quality, and expansion of the NIH full-length cDNA project: the Mammalian Gene Collection (MGC).</title>
        <authorList>
            <consortium name="The MGC Project Team"/>
        </authorList>
    </citation>
    <scope>NUCLEOTIDE SEQUENCE [LARGE SCALE MRNA] (ISOFORM 1)</scope>
    <source>
        <tissue>Ovary</tissue>
    </source>
</reference>
<reference key="5">
    <citation type="journal article" date="2013" name="J. Proteome Res.">
        <title>Toward a comprehensive characterization of a human cancer cell phosphoproteome.</title>
        <authorList>
            <person name="Zhou H."/>
            <person name="Di Palma S."/>
            <person name="Preisinger C."/>
            <person name="Peng M."/>
            <person name="Polat A.N."/>
            <person name="Heck A.J."/>
            <person name="Mohammed S."/>
        </authorList>
    </citation>
    <scope>PHOSPHORYLATION [LARGE SCALE ANALYSIS] AT THR-114</scope>
    <scope>IDENTIFICATION BY MASS SPECTROMETRY [LARGE SCALE ANALYSIS]</scope>
    <source>
        <tissue>Erythroleukemia</tissue>
    </source>
</reference>
<reference key="6">
    <citation type="journal article" date="2013" name="Haematologica">
        <title>Homozygous mutations in a predicted endonuclease are a novel cause of congenital dyserythropoietic anemia type I.</title>
        <authorList>
            <consortium name="WGS500 Consortium"/>
            <person name="Babbs C."/>
            <person name="Roberts N.A."/>
            <person name="Sanchez-Pulido L."/>
            <person name="McGowan S.J."/>
            <person name="Ahmed M.R."/>
            <person name="Brown J.M."/>
            <person name="Sabry M.A."/>
            <person name="Bentley D.R."/>
            <person name="McVean G.A."/>
            <person name="Donnelly P."/>
            <person name="Gileadi O."/>
            <person name="Ponting C.P."/>
            <person name="Higgs D.R."/>
            <person name="Buckle V.J."/>
        </authorList>
    </citation>
    <scope>VARIANTS CDAN1B CYS-94 AND GLN-178</scope>
</reference>
<reference key="7">
    <citation type="journal article" date="2018" name="Am. J. Hematol.">
        <title>Congenital dyserythropoietic anemia type 1: a case with novel compound heterozygous mutations in the C15orf41 gene.</title>
        <authorList>
            <person name="Palmblad J."/>
            <person name="Sander B."/>
            <person name="Bain B."/>
            <person name="Klimkowska M."/>
            <person name="Bjoerck E."/>
        </authorList>
    </citation>
    <scope>VARIANTS CDAN1B ARG-20 AND CYS-236</scope>
</reference>
<reference key="8">
    <citation type="journal article" date="2019" name="Front. Physiol.">
        <title>Characterization of Two Cases of Congenital Dyserythropoietic Anemia Type I Shed Light on the Uncharacterized C15orf41 Protein.</title>
        <authorList>
            <person name="Russo R."/>
            <person name="Marra R."/>
            <person name="Andolfo I."/>
            <person name="De Rosa G."/>
            <person name="Rosato B.E."/>
            <person name="Manna F."/>
            <person name="Gambale A."/>
            <person name="Raia M."/>
            <person name="Unal S."/>
            <person name="Barella S."/>
            <person name="Iolascon A."/>
        </authorList>
    </citation>
    <scope>VARIANTS CDAN1B SER-94 AND PRO-230</scope>
    <scope>CHARACTERIZATION OF VARIANTS CDAN1B SER-94 AND PRO-230</scope>
    <scope>FUNCTION</scope>
    <scope>SUBCELLULAR LOCATION</scope>
</reference>
<reference key="9">
    <citation type="journal article" date="2021" name="Ann. Hematol.">
        <title>Congenital dyserythropoietic anemia types Ib, II, and III: novel variants in the CDIN1 gene and functional study of a novel variant in the KIF23 gene.</title>
        <authorList>
            <person name="Mendez M."/>
            <person name="Moreno-Carralero M.I."/>
            <person name="Peri V.L."/>
            <person name="Camacho-Galan R."/>
            <person name="Bosch-Benitez J.M."/>
            <person name="Huerta-Aragones J."/>
            <person name="Sanchez-Calero-Guilarte J."/>
            <person name="Moreno-Risco M.B."/>
            <person name="Alonso-Dominguez J.M."/>
            <person name="Moran-Jimenez M.J."/>
        </authorList>
    </citation>
    <scope>VARIANTS CDAN1B VAL-136; CYS-247 AND THR-273</scope>
</reference>
<evidence type="ECO:0000269" key="1">
    <source>
    </source>
</evidence>
<evidence type="ECO:0000269" key="2">
    <source>
    </source>
</evidence>
<evidence type="ECO:0000269" key="3">
    <source>
    </source>
</evidence>
<evidence type="ECO:0000269" key="4">
    <source>
    </source>
</evidence>
<evidence type="ECO:0000303" key="5">
    <source>
    </source>
</evidence>
<evidence type="ECO:0000303" key="6">
    <source ref="1"/>
</evidence>
<evidence type="ECO:0000305" key="7"/>
<evidence type="ECO:0000305" key="8">
    <source>
    </source>
</evidence>
<evidence type="ECO:0000312" key="9">
    <source>
        <dbReference type="HGNC" id="HGNC:26929"/>
    </source>
</evidence>
<evidence type="ECO:0007744" key="10">
    <source>
    </source>
</evidence>
<dbReference type="EMBL" id="AF114263">
    <property type="protein sequence ID" value="AAD29606.1"/>
    <property type="molecule type" value="mRNA"/>
</dbReference>
<dbReference type="EMBL" id="AK315446">
    <property type="protein sequence ID" value="BAG37834.1"/>
    <property type="molecule type" value="mRNA"/>
</dbReference>
<dbReference type="EMBL" id="CH471125">
    <property type="protein sequence ID" value="EAW92337.1"/>
    <property type="molecule type" value="Genomic_DNA"/>
</dbReference>
<dbReference type="EMBL" id="BC006254">
    <property type="protein sequence ID" value="AAH06254.1"/>
    <property type="status" value="ALT_INIT"/>
    <property type="molecule type" value="mRNA"/>
</dbReference>
<dbReference type="CCDS" id="CCDS45215.1">
    <molecule id="Q9Y2V0-1"/>
</dbReference>
<dbReference type="CCDS" id="CCDS45216.1">
    <molecule id="Q9Y2V0-2"/>
</dbReference>
<dbReference type="RefSeq" id="NP_001123482.1">
    <molecule id="Q9Y2V0-1"/>
    <property type="nucleotide sequence ID" value="NM_001130010.3"/>
</dbReference>
<dbReference type="RefSeq" id="NP_001277161.1">
    <molecule id="Q9Y2V0-2"/>
    <property type="nucleotide sequence ID" value="NM_001290232.2"/>
</dbReference>
<dbReference type="RefSeq" id="NP_001277162.1">
    <property type="nucleotide sequence ID" value="NM_001290233.1"/>
</dbReference>
<dbReference type="RefSeq" id="NP_001308685.1">
    <molecule id="Q9Y2V0-2"/>
    <property type="nucleotide sequence ID" value="NM_001321756.2"/>
</dbReference>
<dbReference type="RefSeq" id="NP_001308688.1">
    <molecule id="Q9Y2V0-1"/>
    <property type="nucleotide sequence ID" value="NM_001321759.2"/>
</dbReference>
<dbReference type="RefSeq" id="NP_115888.1">
    <molecule id="Q9Y2V0-2"/>
    <property type="nucleotide sequence ID" value="NM_032499.6"/>
</dbReference>
<dbReference type="RefSeq" id="XP_047289130.1">
    <molecule id="Q9Y2V0-2"/>
    <property type="nucleotide sequence ID" value="XM_047433174.1"/>
</dbReference>
<dbReference type="RefSeq" id="XP_054234972.1">
    <molecule id="Q9Y2V0-2"/>
    <property type="nucleotide sequence ID" value="XM_054378997.1"/>
</dbReference>
<dbReference type="SASBDB" id="Q9Y2V0"/>
<dbReference type="SMR" id="Q9Y2V0"/>
<dbReference type="BioGRID" id="124120">
    <property type="interactions" value="31"/>
</dbReference>
<dbReference type="FunCoup" id="Q9Y2V0">
    <property type="interactions" value="2915"/>
</dbReference>
<dbReference type="IntAct" id="Q9Y2V0">
    <property type="interactions" value="12"/>
</dbReference>
<dbReference type="MINT" id="Q9Y2V0"/>
<dbReference type="STRING" id="9606.ENSP00000456477"/>
<dbReference type="iPTMnet" id="Q9Y2V0"/>
<dbReference type="PhosphoSitePlus" id="Q9Y2V0"/>
<dbReference type="BioMuta" id="C15orf41"/>
<dbReference type="DMDM" id="122063330"/>
<dbReference type="jPOST" id="Q9Y2V0"/>
<dbReference type="MassIVE" id="Q9Y2V0"/>
<dbReference type="PaxDb" id="9606-ENSP00000455397"/>
<dbReference type="PeptideAtlas" id="Q9Y2V0"/>
<dbReference type="ProteomicsDB" id="85907">
    <molecule id="Q9Y2V0-1"/>
</dbReference>
<dbReference type="ProteomicsDB" id="85908">
    <molecule id="Q9Y2V0-2"/>
</dbReference>
<dbReference type="Pumba" id="Q9Y2V0"/>
<dbReference type="Antibodypedia" id="53071">
    <property type="antibodies" value="118 antibodies from 14 providers"/>
</dbReference>
<dbReference type="DNASU" id="84529"/>
<dbReference type="Ensembl" id="ENST00000338183.8">
    <molecule id="Q9Y2V0-2"/>
    <property type="protein sequence ID" value="ENSP00000342433.4"/>
    <property type="gene ID" value="ENSG00000186073.14"/>
</dbReference>
<dbReference type="Ensembl" id="ENST00000437989.6">
    <molecule id="Q9Y2V0-1"/>
    <property type="protein sequence ID" value="ENSP00000401362.2"/>
    <property type="gene ID" value="ENSG00000186073.14"/>
</dbReference>
<dbReference type="Ensembl" id="ENST00000562877.5">
    <molecule id="Q9Y2V0-2"/>
    <property type="protein sequence ID" value="ENSP00000457854.1"/>
    <property type="gene ID" value="ENSG00000186073.14"/>
</dbReference>
<dbReference type="Ensembl" id="ENST00000566621.6">
    <molecule id="Q9Y2V0-1"/>
    <property type="protein sequence ID" value="ENSP00000455397.1"/>
    <property type="gene ID" value="ENSG00000186073.14"/>
</dbReference>
<dbReference type="Ensembl" id="ENST00000567389.5">
    <molecule id="Q9Y2V0-2"/>
    <property type="protein sequence ID" value="ENSP00000456736.1"/>
    <property type="gene ID" value="ENSG00000186073.14"/>
</dbReference>
<dbReference type="GeneID" id="84529"/>
<dbReference type="KEGG" id="hsa:84529"/>
<dbReference type="MANE-Select" id="ENST00000566621.6">
    <property type="protein sequence ID" value="ENSP00000455397.1"/>
    <property type="RefSeq nucleotide sequence ID" value="NM_001321759.2"/>
    <property type="RefSeq protein sequence ID" value="NP_001308688.1"/>
</dbReference>
<dbReference type="UCSC" id="uc001zje.5">
    <molecule id="Q9Y2V0-1"/>
    <property type="organism name" value="human"/>
</dbReference>
<dbReference type="AGR" id="HGNC:26929"/>
<dbReference type="CTD" id="84529"/>
<dbReference type="DisGeNET" id="84529"/>
<dbReference type="GeneCards" id="CDIN1"/>
<dbReference type="GeneReviews" id="CDIN1"/>
<dbReference type="HGNC" id="HGNC:26929">
    <property type="gene designation" value="CDIN1"/>
</dbReference>
<dbReference type="HPA" id="ENSG00000186073">
    <property type="expression patterns" value="Group enriched (heart muscle, tongue)"/>
</dbReference>
<dbReference type="MalaCards" id="CDIN1"/>
<dbReference type="MIM" id="615626">
    <property type="type" value="gene"/>
</dbReference>
<dbReference type="MIM" id="615631">
    <property type="type" value="phenotype"/>
</dbReference>
<dbReference type="neXtProt" id="NX_Q9Y2V0"/>
<dbReference type="OpenTargets" id="ENSG00000186073"/>
<dbReference type="Orphanet" id="98869">
    <property type="disease" value="Congenital dyserythropoietic anemia type I"/>
</dbReference>
<dbReference type="VEuPathDB" id="HostDB:ENSG00000186073"/>
<dbReference type="eggNOG" id="ENOG502R9SY">
    <property type="taxonomic scope" value="Eukaryota"/>
</dbReference>
<dbReference type="GeneTree" id="ENSGT00390000018465"/>
<dbReference type="HOGENOM" id="CLU_076808_0_1_1"/>
<dbReference type="InParanoid" id="Q9Y2V0"/>
<dbReference type="OrthoDB" id="1272at2759"/>
<dbReference type="PAN-GO" id="Q9Y2V0">
    <property type="GO annotations" value="3 GO annotations based on evolutionary models"/>
</dbReference>
<dbReference type="PhylomeDB" id="Q9Y2V0"/>
<dbReference type="TreeFam" id="TF324079"/>
<dbReference type="PathwayCommons" id="Q9Y2V0"/>
<dbReference type="SignaLink" id="Q9Y2V0"/>
<dbReference type="BioGRID-ORCS" id="84529">
    <property type="hits" value="181 hits in 1130 CRISPR screens"/>
</dbReference>
<dbReference type="ChiTaRS" id="C15orf41">
    <property type="organism name" value="human"/>
</dbReference>
<dbReference type="GenomeRNAi" id="84529"/>
<dbReference type="Pharos" id="Q9Y2V0">
    <property type="development level" value="Tbio"/>
</dbReference>
<dbReference type="PRO" id="PR:Q9Y2V0"/>
<dbReference type="Proteomes" id="UP000005640">
    <property type="component" value="Chromosome 15"/>
</dbReference>
<dbReference type="RNAct" id="Q9Y2V0">
    <property type="molecule type" value="protein"/>
</dbReference>
<dbReference type="Bgee" id="ENSG00000186073">
    <property type="expression patterns" value="Expressed in left ventricle myocardium and 157 other cell types or tissues"/>
</dbReference>
<dbReference type="ExpressionAtlas" id="Q9Y2V0">
    <property type="expression patterns" value="baseline and differential"/>
</dbReference>
<dbReference type="GO" id="GO:0005737">
    <property type="term" value="C:cytoplasm"/>
    <property type="evidence" value="ECO:0000314"/>
    <property type="project" value="UniProtKB"/>
</dbReference>
<dbReference type="GO" id="GO:0005634">
    <property type="term" value="C:nucleus"/>
    <property type="evidence" value="ECO:0000314"/>
    <property type="project" value="UniProtKB"/>
</dbReference>
<dbReference type="GO" id="GO:0030218">
    <property type="term" value="P:erythrocyte differentiation"/>
    <property type="evidence" value="ECO:0000315"/>
    <property type="project" value="UniProtKB"/>
</dbReference>
<dbReference type="InterPro" id="IPR029404">
    <property type="entry name" value="CDIN1"/>
</dbReference>
<dbReference type="PANTHER" id="PTHR31661:SF1">
    <property type="entry name" value="CDAN1-INTERACTING NUCLEASE 1"/>
    <property type="match status" value="1"/>
</dbReference>
<dbReference type="PANTHER" id="PTHR31661">
    <property type="entry name" value="SIMILAR TO CDNA SEQUENCE BC052040"/>
    <property type="match status" value="1"/>
</dbReference>
<dbReference type="Pfam" id="PF14811">
    <property type="entry name" value="TPD"/>
    <property type="match status" value="1"/>
</dbReference>
<keyword id="KW-0025">Alternative splicing</keyword>
<keyword id="KW-1055">Congenital dyserythropoietic anemia</keyword>
<keyword id="KW-0963">Cytoplasm</keyword>
<keyword id="KW-0225">Disease variant</keyword>
<keyword id="KW-0360">Hereditary hemolytic anemia</keyword>
<keyword id="KW-0539">Nucleus</keyword>
<keyword id="KW-0597">Phosphoprotein</keyword>
<keyword id="KW-1267">Proteomics identification</keyword>
<keyword id="KW-1185">Reference proteome</keyword>
<comment type="function">
    <text evidence="3">Plays a role in erythroid cell differentiation.</text>
</comment>
<comment type="interaction">
    <interactant intactId="EBI-1047601">
        <id>Q9Y2V0</id>
    </interactant>
    <interactant intactId="EBI-358993">
        <id>Q15645</id>
        <label>TRIP13</label>
    </interactant>
    <organismsDiffer>false</organismsDiffer>
    <experiments>3</experiments>
</comment>
<comment type="subcellular location">
    <subcellularLocation>
        <location evidence="3">Nucleus</location>
    </subcellularLocation>
    <subcellularLocation>
        <location evidence="3">Cytoplasm</location>
    </subcellularLocation>
    <text evidence="3">Mainly nuclear.</text>
</comment>
<comment type="alternative products">
    <event type="alternative splicing"/>
    <isoform>
        <id>Q9Y2V0-1</id>
        <name>1</name>
        <sequence type="displayed"/>
    </isoform>
    <isoform>
        <id>Q9Y2V0-2</id>
        <name>2</name>
        <sequence type="described" ref="VSP_022271"/>
    </isoform>
</comment>
<comment type="disease" evidence="1 2 3 4">
    <disease id="DI-04032">
        <name>Anemia, congenital dyserythropoietic, 1B</name>
        <acronym>CDAN1B</acronym>
        <description>An autosomal recessive blood disorder characterized by morphological abnormalities of erythroblasts, ineffective erythropoiesis, macrocytic anemia and secondary hemochromatosis. It is occasionally associated with bone abnormalities, especially of the hands and feet (acrodysostosis), nail hypoplasia, and scoliosis. Ultrastructural features include internuclear chromatin bridges connecting some nearly completely separated erythroblasts and an abnormal appearance (spongy or Swiss-cheese appearance) of the heterochromatin in a high proportion of the erythroblasts.</description>
        <dbReference type="MIM" id="615631"/>
    </disease>
    <text>The disease is caused by variants affecting the gene represented in this entry.</text>
</comment>
<comment type="caution">
    <text evidence="8">Based on sequence similarity, it has been suggested that C15orf41 might encode a divalent metal-ion dependent restriction endonuclease, although nuclease activity could not be experimentally proven.</text>
</comment>
<comment type="sequence caution" evidence="7">
    <conflict type="erroneous initiation">
        <sequence resource="EMBL-CDS" id="AAH06254"/>
    </conflict>
    <text>Truncated N-terminus.</text>
</comment>
<sequence length="281" mass="32264">MILTKAQYDEIAQCLVSVPPTRQSLRKLKQRFPSQSQATLLSIFSQEYQKHIKRTHAKHHTSEAIESYYQRYLNGVVKNGAAPVLLDLANEVDYAPSLMARLILERFLQEHEETPPSKSIINSMLRDPSQIPDGVLANQVYQCIVNDCCYGPLVDCIKHAIGHEHEVLLRDLLLEKNLSFLDEDQLRAKGYDKTPDFILQVPVAVEGHIIHWIESKASFGDECSHHAYLHDQFWSYWNRFGPGLVIYWYGFIQELDCNRERGILLKACFPTNIVTLCHSIA</sequence>